<reference key="1">
    <citation type="journal article" date="2008" name="J. Bacteriol.">
        <title>The complete genome sequence of Escherichia coli DH10B: insights into the biology of a laboratory workhorse.</title>
        <authorList>
            <person name="Durfee T."/>
            <person name="Nelson R."/>
            <person name="Baldwin S."/>
            <person name="Plunkett G. III"/>
            <person name="Burland V."/>
            <person name="Mau B."/>
            <person name="Petrosino J.F."/>
            <person name="Qin X."/>
            <person name="Muzny D.M."/>
            <person name="Ayele M."/>
            <person name="Gibbs R.A."/>
            <person name="Csorgo B."/>
            <person name="Posfai G."/>
            <person name="Weinstock G.M."/>
            <person name="Blattner F.R."/>
        </authorList>
    </citation>
    <scope>NUCLEOTIDE SEQUENCE [LARGE SCALE GENOMIC DNA]</scope>
    <source>
        <strain>K12 / DH10B</strain>
    </source>
</reference>
<proteinExistence type="inferred from homology"/>
<evidence type="ECO:0000255" key="1">
    <source>
        <dbReference type="HAMAP-Rule" id="MF_00402"/>
    </source>
</evidence>
<evidence type="ECO:0000305" key="2"/>
<protein>
    <recommendedName>
        <fullName evidence="1">Large ribosomal subunit protein bL19</fullName>
    </recommendedName>
    <alternativeName>
        <fullName evidence="2">50S ribosomal protein L19</fullName>
    </alternativeName>
</protein>
<organism>
    <name type="scientific">Escherichia coli (strain K12 / DH10B)</name>
    <dbReference type="NCBI Taxonomy" id="316385"/>
    <lineage>
        <taxon>Bacteria</taxon>
        <taxon>Pseudomonadati</taxon>
        <taxon>Pseudomonadota</taxon>
        <taxon>Gammaproteobacteria</taxon>
        <taxon>Enterobacterales</taxon>
        <taxon>Enterobacteriaceae</taxon>
        <taxon>Escherichia</taxon>
    </lineage>
</organism>
<accession>B1XBS8</accession>
<keyword id="KW-0687">Ribonucleoprotein</keyword>
<keyword id="KW-0689">Ribosomal protein</keyword>
<dbReference type="EMBL" id="CP000948">
    <property type="protein sequence ID" value="ACB03752.1"/>
    <property type="molecule type" value="Genomic_DNA"/>
</dbReference>
<dbReference type="RefSeq" id="WP_000065253.1">
    <property type="nucleotide sequence ID" value="NC_010473.1"/>
</dbReference>
<dbReference type="SMR" id="B1XBS8"/>
<dbReference type="GeneID" id="93774456"/>
<dbReference type="KEGG" id="ecd:ECDH10B_2773"/>
<dbReference type="HOGENOM" id="CLU_103507_2_1_6"/>
<dbReference type="GO" id="GO:0022625">
    <property type="term" value="C:cytosolic large ribosomal subunit"/>
    <property type="evidence" value="ECO:0007669"/>
    <property type="project" value="TreeGrafter"/>
</dbReference>
<dbReference type="GO" id="GO:0003735">
    <property type="term" value="F:structural constituent of ribosome"/>
    <property type="evidence" value="ECO:0007669"/>
    <property type="project" value="InterPro"/>
</dbReference>
<dbReference type="GO" id="GO:0006412">
    <property type="term" value="P:translation"/>
    <property type="evidence" value="ECO:0007669"/>
    <property type="project" value="UniProtKB-UniRule"/>
</dbReference>
<dbReference type="FunFam" id="2.30.30.790:FF:000001">
    <property type="entry name" value="50S ribosomal protein L19"/>
    <property type="match status" value="1"/>
</dbReference>
<dbReference type="Gene3D" id="2.30.30.790">
    <property type="match status" value="1"/>
</dbReference>
<dbReference type="HAMAP" id="MF_00402">
    <property type="entry name" value="Ribosomal_bL19"/>
    <property type="match status" value="1"/>
</dbReference>
<dbReference type="InterPro" id="IPR001857">
    <property type="entry name" value="Ribosomal_bL19"/>
</dbReference>
<dbReference type="InterPro" id="IPR018257">
    <property type="entry name" value="Ribosomal_bL19_CS"/>
</dbReference>
<dbReference type="InterPro" id="IPR038657">
    <property type="entry name" value="Ribosomal_bL19_sf"/>
</dbReference>
<dbReference type="InterPro" id="IPR008991">
    <property type="entry name" value="Translation_prot_SH3-like_sf"/>
</dbReference>
<dbReference type="NCBIfam" id="TIGR01024">
    <property type="entry name" value="rplS_bact"/>
    <property type="match status" value="1"/>
</dbReference>
<dbReference type="PANTHER" id="PTHR15680:SF9">
    <property type="entry name" value="LARGE RIBOSOMAL SUBUNIT PROTEIN BL19M"/>
    <property type="match status" value="1"/>
</dbReference>
<dbReference type="PANTHER" id="PTHR15680">
    <property type="entry name" value="RIBOSOMAL PROTEIN L19"/>
    <property type="match status" value="1"/>
</dbReference>
<dbReference type="Pfam" id="PF01245">
    <property type="entry name" value="Ribosomal_L19"/>
    <property type="match status" value="1"/>
</dbReference>
<dbReference type="PIRSF" id="PIRSF002191">
    <property type="entry name" value="Ribosomal_L19"/>
    <property type="match status" value="1"/>
</dbReference>
<dbReference type="PRINTS" id="PR00061">
    <property type="entry name" value="RIBOSOMALL19"/>
</dbReference>
<dbReference type="SUPFAM" id="SSF50104">
    <property type="entry name" value="Translation proteins SH3-like domain"/>
    <property type="match status" value="1"/>
</dbReference>
<dbReference type="PROSITE" id="PS01015">
    <property type="entry name" value="RIBOSOMAL_L19"/>
    <property type="match status" value="1"/>
</dbReference>
<comment type="function">
    <text evidence="1">This protein is located at the 30S-50S ribosomal subunit interface and may play a role in the structure and function of the aminoacyl-tRNA binding site.</text>
</comment>
<comment type="similarity">
    <text evidence="1">Belongs to the bacterial ribosomal protein bL19 family.</text>
</comment>
<gene>
    <name evidence="1" type="primary">rplS</name>
    <name type="ordered locus">ECDH10B_2773</name>
</gene>
<sequence>MSNIIKQLEQEQMKQDVPSFRPGDTVEVKVWVVEGSKKRLQAFEGVVIAIRNRGLHSAFTVRKISNGEGVERVFQTHSPVVDSISVKRRGAVRKAKLYYLRERTGKAARIKERLN</sequence>
<name>RL19_ECODH</name>
<feature type="chain" id="PRO_1000193830" description="Large ribosomal subunit protein bL19">
    <location>
        <begin position="1"/>
        <end position="115"/>
    </location>
</feature>